<dbReference type="EMBL" id="CM000160">
    <property type="protein sequence ID" value="EDW96195.1"/>
    <property type="molecule type" value="Genomic_DNA"/>
</dbReference>
<dbReference type="RefSeq" id="XP_002096483.1">
    <property type="nucleotide sequence ID" value="XM_002096447.2"/>
</dbReference>
<dbReference type="SMR" id="B4PPU5"/>
<dbReference type="EnsemblMetazoa" id="FBtr0272213">
    <property type="protein sequence ID" value="FBpp0270705"/>
    <property type="gene ID" value="FBgn0242753"/>
</dbReference>
<dbReference type="GeneID" id="6535864"/>
<dbReference type="KEGG" id="dya:Dyak_GE25695"/>
<dbReference type="HOGENOM" id="CLU_152780_0_0_1"/>
<dbReference type="OMA" id="CSAYSNQ"/>
<dbReference type="OrthoDB" id="7861285at2759"/>
<dbReference type="PhylomeDB" id="B4PPU5"/>
<dbReference type="Proteomes" id="UP000002282">
    <property type="component" value="Chromosome 3R"/>
</dbReference>
<dbReference type="GO" id="GO:0005615">
    <property type="term" value="C:extracellular space"/>
    <property type="evidence" value="ECO:0000250"/>
    <property type="project" value="UniProtKB"/>
</dbReference>
<dbReference type="GO" id="GO:0034605">
    <property type="term" value="P:cellular response to heat"/>
    <property type="evidence" value="ECO:0007669"/>
    <property type="project" value="EnsemblMetazoa"/>
</dbReference>
<dbReference type="GO" id="GO:0034644">
    <property type="term" value="P:cellular response to UV"/>
    <property type="evidence" value="ECO:0007669"/>
    <property type="project" value="EnsemblMetazoa"/>
</dbReference>
<dbReference type="GO" id="GO:0045087">
    <property type="term" value="P:innate immune response"/>
    <property type="evidence" value="ECO:0007669"/>
    <property type="project" value="UniProtKB-KW"/>
</dbReference>
<dbReference type="GO" id="GO:0009617">
    <property type="term" value="P:response to bacterium"/>
    <property type="evidence" value="ECO:0007669"/>
    <property type="project" value="EnsemblMetazoa"/>
</dbReference>
<dbReference type="GO" id="GO:0009408">
    <property type="term" value="P:response to heat"/>
    <property type="evidence" value="ECO:0000250"/>
    <property type="project" value="UniProtKB"/>
</dbReference>
<dbReference type="GO" id="GO:0009411">
    <property type="term" value="P:response to UV"/>
    <property type="evidence" value="ECO:0000250"/>
    <property type="project" value="UniProtKB"/>
</dbReference>
<dbReference type="InterPro" id="IPR010825">
    <property type="entry name" value="Turandot"/>
</dbReference>
<dbReference type="Pfam" id="PF07240">
    <property type="entry name" value="Turandot"/>
    <property type="match status" value="1"/>
</dbReference>
<evidence type="ECO:0000250" key="1">
    <source>
        <dbReference type="UniProtKB" id="Q9VDH4"/>
    </source>
</evidence>
<evidence type="ECO:0000255" key="2"/>
<evidence type="ECO:0000312" key="3">
    <source>
        <dbReference type="EMBL" id="EDW96195.1"/>
    </source>
</evidence>
<reference evidence="3" key="1">
    <citation type="journal article" date="2007" name="Nature">
        <title>Evolution of genes and genomes on the Drosophila phylogeny.</title>
        <authorList>
            <consortium name="Drosophila 12 genomes consortium"/>
        </authorList>
    </citation>
    <scope>NUCLEOTIDE SEQUENCE [LARGE SCALE GENOMIC DNA]</scope>
    <source>
        <strain evidence="3">Tai18E2 / Tucson 14021-0261.01</strain>
    </source>
</reference>
<protein>
    <recommendedName>
        <fullName>Protein Turandot B</fullName>
    </recommendedName>
</protein>
<comment type="function">
    <text evidence="1">A humoral factor that may play a role in stress tolerance.</text>
</comment>
<comment type="subcellular location">
    <subcellularLocation>
        <location evidence="1">Secreted</location>
    </subcellularLocation>
</comment>
<comment type="similarity">
    <text evidence="2">Belongs to the Turandot family.</text>
</comment>
<keyword id="KW-0391">Immunity</keyword>
<keyword id="KW-0399">Innate immunity</keyword>
<keyword id="KW-0964">Secreted</keyword>
<keyword id="KW-0732">Signal</keyword>
<sequence>MNFNMSMICFALLLIVTLCSAYSVQQRQADSLRVAEIIRTSQDENTKINRIQELLTIYNRMAPSLRPAERARLDKFISEHTQEVLIDGVPTQGGSRMKIIRKALTPAAKDVATGFFTELGASIASIFTNWFKSSTEPSH</sequence>
<name>TOTB_DROYA</name>
<organism>
    <name type="scientific">Drosophila yakuba</name>
    <name type="common">Fruit fly</name>
    <dbReference type="NCBI Taxonomy" id="7245"/>
    <lineage>
        <taxon>Eukaryota</taxon>
        <taxon>Metazoa</taxon>
        <taxon>Ecdysozoa</taxon>
        <taxon>Arthropoda</taxon>
        <taxon>Hexapoda</taxon>
        <taxon>Insecta</taxon>
        <taxon>Pterygota</taxon>
        <taxon>Neoptera</taxon>
        <taxon>Endopterygota</taxon>
        <taxon>Diptera</taxon>
        <taxon>Brachycera</taxon>
        <taxon>Muscomorpha</taxon>
        <taxon>Ephydroidea</taxon>
        <taxon>Drosophilidae</taxon>
        <taxon>Drosophila</taxon>
        <taxon>Sophophora</taxon>
    </lineage>
</organism>
<accession>B4PPU5</accession>
<proteinExistence type="inferred from homology"/>
<gene>
    <name evidence="1" type="primary">TotB</name>
    <name type="ORF">GE25695</name>
</gene>
<feature type="signal peptide" evidence="2">
    <location>
        <begin position="1"/>
        <end position="21"/>
    </location>
</feature>
<feature type="chain" id="PRO_0000354983" description="Protein Turandot B">
    <location>
        <begin position="22"/>
        <end position="139"/>
    </location>
</feature>